<dbReference type="EC" id="2.7.7.77" evidence="1"/>
<dbReference type="EMBL" id="AE002098">
    <property type="status" value="NOT_ANNOTATED_CDS"/>
    <property type="molecule type" value="Genomic_DNA"/>
</dbReference>
<dbReference type="SMR" id="P58747"/>
<dbReference type="FunCoup" id="P58747">
    <property type="interactions" value="65"/>
</dbReference>
<dbReference type="InParanoid" id="P58747"/>
<dbReference type="Proteomes" id="UP000000425">
    <property type="component" value="Chromosome"/>
</dbReference>
<dbReference type="GO" id="GO:0005737">
    <property type="term" value="C:cytoplasm"/>
    <property type="evidence" value="ECO:0007669"/>
    <property type="project" value="UniProtKB-SubCell"/>
</dbReference>
<dbReference type="GO" id="GO:0005525">
    <property type="term" value="F:GTP binding"/>
    <property type="evidence" value="ECO:0007669"/>
    <property type="project" value="UniProtKB-UniRule"/>
</dbReference>
<dbReference type="GO" id="GO:0046872">
    <property type="term" value="F:metal ion binding"/>
    <property type="evidence" value="ECO:0007669"/>
    <property type="project" value="UniProtKB-KW"/>
</dbReference>
<dbReference type="GO" id="GO:0061603">
    <property type="term" value="F:molybdenum cofactor guanylyltransferase activity"/>
    <property type="evidence" value="ECO:0007669"/>
    <property type="project" value="UniProtKB-EC"/>
</dbReference>
<dbReference type="GO" id="GO:0016779">
    <property type="term" value="F:nucleotidyltransferase activity"/>
    <property type="evidence" value="ECO:0000318"/>
    <property type="project" value="GO_Central"/>
</dbReference>
<dbReference type="GO" id="GO:1902758">
    <property type="term" value="P:bis(molybdopterin guanine dinucleotide)molybdenum biosynthetic process"/>
    <property type="evidence" value="ECO:0000318"/>
    <property type="project" value="GO_Central"/>
</dbReference>
<dbReference type="CDD" id="cd02503">
    <property type="entry name" value="MobA"/>
    <property type="match status" value="1"/>
</dbReference>
<dbReference type="Gene3D" id="3.90.550.10">
    <property type="entry name" value="Spore Coat Polysaccharide Biosynthesis Protein SpsA, Chain A"/>
    <property type="match status" value="1"/>
</dbReference>
<dbReference type="HAMAP" id="MF_00316">
    <property type="entry name" value="MobA"/>
    <property type="match status" value="1"/>
</dbReference>
<dbReference type="InterPro" id="IPR025877">
    <property type="entry name" value="MobA-like_NTP_Trfase"/>
</dbReference>
<dbReference type="InterPro" id="IPR013482">
    <property type="entry name" value="Molybde_CF_guanTrfase"/>
</dbReference>
<dbReference type="InterPro" id="IPR029044">
    <property type="entry name" value="Nucleotide-diphossugar_trans"/>
</dbReference>
<dbReference type="PANTHER" id="PTHR19136">
    <property type="entry name" value="MOLYBDENUM COFACTOR GUANYLYLTRANSFERASE"/>
    <property type="match status" value="1"/>
</dbReference>
<dbReference type="PANTHER" id="PTHR19136:SF81">
    <property type="entry name" value="MOLYBDENUM COFACTOR GUANYLYLTRANSFERASE"/>
    <property type="match status" value="1"/>
</dbReference>
<dbReference type="Pfam" id="PF12804">
    <property type="entry name" value="NTP_transf_3"/>
    <property type="match status" value="1"/>
</dbReference>
<dbReference type="SUPFAM" id="SSF53448">
    <property type="entry name" value="Nucleotide-diphospho-sugar transferases"/>
    <property type="match status" value="1"/>
</dbReference>
<name>MOBA_NEIMB</name>
<feature type="chain" id="PRO_0000134897" description="Putative molybdenum cofactor guanylyltransferase">
    <location>
        <begin position="1"/>
        <end position="192"/>
    </location>
</feature>
<feature type="binding site" evidence="1">
    <location>
        <begin position="8"/>
        <end position="10"/>
    </location>
    <ligand>
        <name>GTP</name>
        <dbReference type="ChEBI" id="CHEBI:37565"/>
    </ligand>
</feature>
<feature type="binding site" evidence="1">
    <location>
        <position position="21"/>
    </location>
    <ligand>
        <name>GTP</name>
        <dbReference type="ChEBI" id="CHEBI:37565"/>
    </ligand>
</feature>
<feature type="binding site" evidence="1">
    <location>
        <position position="67"/>
    </location>
    <ligand>
        <name>GTP</name>
        <dbReference type="ChEBI" id="CHEBI:37565"/>
    </ligand>
</feature>
<feature type="binding site" evidence="1">
    <location>
        <position position="101"/>
    </location>
    <ligand>
        <name>GTP</name>
        <dbReference type="ChEBI" id="CHEBI:37565"/>
    </ligand>
</feature>
<feature type="binding site" evidence="1">
    <location>
        <position position="101"/>
    </location>
    <ligand>
        <name>Mg(2+)</name>
        <dbReference type="ChEBI" id="CHEBI:18420"/>
    </ligand>
</feature>
<reference key="1">
    <citation type="journal article" date="2000" name="Science">
        <title>Complete genome sequence of Neisseria meningitidis serogroup B strain MC58.</title>
        <authorList>
            <person name="Tettelin H."/>
            <person name="Saunders N.J."/>
            <person name="Heidelberg J.F."/>
            <person name="Jeffries A.C."/>
            <person name="Nelson K.E."/>
            <person name="Eisen J.A."/>
            <person name="Ketchum K.A."/>
            <person name="Hood D.W."/>
            <person name="Peden J.F."/>
            <person name="Dodson R.J."/>
            <person name="Nelson W.C."/>
            <person name="Gwinn M.L."/>
            <person name="DeBoy R.T."/>
            <person name="Peterson J.D."/>
            <person name="Hickey E.K."/>
            <person name="Haft D.H."/>
            <person name="Salzberg S.L."/>
            <person name="White O."/>
            <person name="Fleischmann R.D."/>
            <person name="Dougherty B.A."/>
            <person name="Mason T.M."/>
            <person name="Ciecko A."/>
            <person name="Parksey D.S."/>
            <person name="Blair E."/>
            <person name="Cittone H."/>
            <person name="Clark E.B."/>
            <person name="Cotton M.D."/>
            <person name="Utterback T.R."/>
            <person name="Khouri H.M."/>
            <person name="Qin H."/>
            <person name="Vamathevan J.J."/>
            <person name="Gill J."/>
            <person name="Scarlato V."/>
            <person name="Masignani V."/>
            <person name="Pizza M."/>
            <person name="Grandi G."/>
            <person name="Sun L."/>
            <person name="Smith H.O."/>
            <person name="Fraser C.M."/>
            <person name="Moxon E.R."/>
            <person name="Rappuoli R."/>
            <person name="Venter J.C."/>
        </authorList>
    </citation>
    <scope>NUCLEOTIDE SEQUENCE [LARGE SCALE GENOMIC DNA]</scope>
    <source>
        <strain>ATCC BAA-335 / MC58</strain>
    </source>
</reference>
<organism>
    <name type="scientific">Neisseria meningitidis serogroup B (strain ATCC BAA-335 / MC58)</name>
    <dbReference type="NCBI Taxonomy" id="122586"/>
    <lineage>
        <taxon>Bacteria</taxon>
        <taxon>Pseudomonadati</taxon>
        <taxon>Pseudomonadota</taxon>
        <taxon>Betaproteobacteria</taxon>
        <taxon>Neisseriales</taxon>
        <taxon>Neisseriaceae</taxon>
        <taxon>Neisseria</taxon>
    </lineage>
</organism>
<gene>
    <name evidence="1" type="primary">mobA</name>
    <name type="ordered locus">NMB1248</name>
</gene>
<accession>P58747</accession>
<sequence length="192" mass="21727">MKTFALILAGGQASRMGGEDKGLALLGGKALIDHVIDRVRPQVSHIAISTNRNLEEYARRSPHIFPDARQWQHFGPLSALCTAANDLQLAAADWLLVVPCDMPYLPDDLVARFETVSKRTPLCNAYYVETPITMHYNIMYIRPQILQSAIPYLFSGMKTLRSWLQQQRARPVRFEFDGHFADLNTQIDLQEG</sequence>
<protein>
    <recommendedName>
        <fullName>Putative molybdenum cofactor guanylyltransferase</fullName>
        <shortName evidence="1">MoCo guanylyltransferase</shortName>
        <ecNumber evidence="1">2.7.7.77</ecNumber>
    </recommendedName>
    <alternativeName>
        <fullName evidence="1">GTP:molybdopterin guanylyltransferase</fullName>
    </alternativeName>
    <alternativeName>
        <fullName evidence="1">Mo-MPT guanylyltransferase</fullName>
    </alternativeName>
    <alternativeName>
        <fullName evidence="1">Molybdopterin guanylyltransferase</fullName>
    </alternativeName>
    <alternativeName>
        <fullName evidence="1">Molybdopterin-guanine dinucleotide synthase</fullName>
        <shortName evidence="1">MGD synthase</shortName>
    </alternativeName>
</protein>
<keyword id="KW-0963">Cytoplasm</keyword>
<keyword id="KW-0342">GTP-binding</keyword>
<keyword id="KW-0460">Magnesium</keyword>
<keyword id="KW-0479">Metal-binding</keyword>
<keyword id="KW-0501">Molybdenum cofactor biosynthesis</keyword>
<keyword id="KW-0547">Nucleotide-binding</keyword>
<keyword id="KW-1185">Reference proteome</keyword>
<keyword id="KW-0808">Transferase</keyword>
<evidence type="ECO:0000255" key="1">
    <source>
        <dbReference type="HAMAP-Rule" id="MF_00316"/>
    </source>
</evidence>
<evidence type="ECO:0000305" key="2"/>
<proteinExistence type="uncertain"/>
<comment type="function">
    <text evidence="1">Transfers a GMP moiety from GTP to Mo-molybdopterin (Mo-MPT) cofactor (Moco or molybdenum cofactor) to form Mo-molybdopterin guanine dinucleotide (Mo-MGD) cofactor.</text>
</comment>
<comment type="catalytic activity">
    <reaction evidence="1">
        <text>Mo-molybdopterin + GTP + H(+) = Mo-molybdopterin guanine dinucleotide + diphosphate</text>
        <dbReference type="Rhea" id="RHEA:34243"/>
        <dbReference type="ChEBI" id="CHEBI:15378"/>
        <dbReference type="ChEBI" id="CHEBI:33019"/>
        <dbReference type="ChEBI" id="CHEBI:37565"/>
        <dbReference type="ChEBI" id="CHEBI:71302"/>
        <dbReference type="ChEBI" id="CHEBI:71310"/>
        <dbReference type="EC" id="2.7.7.77"/>
    </reaction>
</comment>
<comment type="cofactor">
    <cofactor evidence="1">
        <name>Mg(2+)</name>
        <dbReference type="ChEBI" id="CHEBI:18420"/>
    </cofactor>
</comment>
<comment type="subunit">
    <text evidence="1">Monomer.</text>
</comment>
<comment type="subcellular location">
    <subcellularLocation>
        <location evidence="1">Cytoplasm</location>
    </subcellularLocation>
</comment>
<comment type="domain">
    <text evidence="1">The N-terminal domain determines nucleotide recognition and specific binding, while the C-terminal domain determines the specific binding to the target protein.</text>
</comment>
<comment type="similarity">
    <text evidence="1">Belongs to the MobA family.</text>
</comment>
<comment type="caution">
    <text evidence="2">Could be the product of a pseudogene.</text>
</comment>
<comment type="sequence caution" evidence="2">
    <conflict type="frameshift">
        <sequence resource="EMBL" id="AE002098"/>
    </conflict>
</comment>